<reference key="1">
    <citation type="journal article" date="2002" name="Plant J.">
        <title>A KAS2 cDNA complements the phenotypes of the Arabidopsis fab1 mutant that differs in a single residue bordering the substrate binding pocket.</title>
        <authorList>
            <person name="Carlsson A.S."/>
            <person name="LaBrie S.T."/>
            <person name="Kinney A.J."/>
            <person name="von Wettstein-Knowles P."/>
            <person name="Browse J."/>
        </authorList>
    </citation>
    <scope>NUCLEOTIDE SEQUENCE [MRNA]</scope>
    <scope>FUNCTION</scope>
    <scope>MUTAGENESIS OF LEU-337</scope>
    <source>
        <strain>cv. Wassilewskija</strain>
    </source>
</reference>
<reference key="2">
    <citation type="journal article" date="2000" name="Nature">
        <title>Sequence and analysis of chromosome 1 of the plant Arabidopsis thaliana.</title>
        <authorList>
            <person name="Theologis A."/>
            <person name="Ecker J.R."/>
            <person name="Palm C.J."/>
            <person name="Federspiel N.A."/>
            <person name="Kaul S."/>
            <person name="White O."/>
            <person name="Alonso J."/>
            <person name="Altafi H."/>
            <person name="Araujo R."/>
            <person name="Bowman C.L."/>
            <person name="Brooks S.Y."/>
            <person name="Buehler E."/>
            <person name="Chan A."/>
            <person name="Chao Q."/>
            <person name="Chen H."/>
            <person name="Cheuk R.F."/>
            <person name="Chin C.W."/>
            <person name="Chung M.K."/>
            <person name="Conn L."/>
            <person name="Conway A.B."/>
            <person name="Conway A.R."/>
            <person name="Creasy T.H."/>
            <person name="Dewar K."/>
            <person name="Dunn P."/>
            <person name="Etgu P."/>
            <person name="Feldblyum T.V."/>
            <person name="Feng J.-D."/>
            <person name="Fong B."/>
            <person name="Fujii C.Y."/>
            <person name="Gill J.E."/>
            <person name="Goldsmith A.D."/>
            <person name="Haas B."/>
            <person name="Hansen N.F."/>
            <person name="Hughes B."/>
            <person name="Huizar L."/>
            <person name="Hunter J.L."/>
            <person name="Jenkins J."/>
            <person name="Johnson-Hopson C."/>
            <person name="Khan S."/>
            <person name="Khaykin E."/>
            <person name="Kim C.J."/>
            <person name="Koo H.L."/>
            <person name="Kremenetskaia I."/>
            <person name="Kurtz D.B."/>
            <person name="Kwan A."/>
            <person name="Lam B."/>
            <person name="Langin-Hooper S."/>
            <person name="Lee A."/>
            <person name="Lee J.M."/>
            <person name="Lenz C.A."/>
            <person name="Li J.H."/>
            <person name="Li Y.-P."/>
            <person name="Lin X."/>
            <person name="Liu S.X."/>
            <person name="Liu Z.A."/>
            <person name="Luros J.S."/>
            <person name="Maiti R."/>
            <person name="Marziali A."/>
            <person name="Militscher J."/>
            <person name="Miranda M."/>
            <person name="Nguyen M."/>
            <person name="Nierman W.C."/>
            <person name="Osborne B.I."/>
            <person name="Pai G."/>
            <person name="Peterson J."/>
            <person name="Pham P.K."/>
            <person name="Rizzo M."/>
            <person name="Rooney T."/>
            <person name="Rowley D."/>
            <person name="Sakano H."/>
            <person name="Salzberg S.L."/>
            <person name="Schwartz J.R."/>
            <person name="Shinn P."/>
            <person name="Southwick A.M."/>
            <person name="Sun H."/>
            <person name="Tallon L.J."/>
            <person name="Tambunga G."/>
            <person name="Toriumi M.J."/>
            <person name="Town C.D."/>
            <person name="Utterback T."/>
            <person name="Van Aken S."/>
            <person name="Vaysberg M."/>
            <person name="Vysotskaia V.S."/>
            <person name="Walker M."/>
            <person name="Wu D."/>
            <person name="Yu G."/>
            <person name="Fraser C.M."/>
            <person name="Venter J.C."/>
            <person name="Davis R.W."/>
        </authorList>
    </citation>
    <scope>NUCLEOTIDE SEQUENCE [LARGE SCALE GENOMIC DNA]</scope>
    <source>
        <strain>cv. Columbia</strain>
    </source>
</reference>
<reference key="3">
    <citation type="journal article" date="2017" name="Plant J.">
        <title>Araport11: a complete reannotation of the Arabidopsis thaliana reference genome.</title>
        <authorList>
            <person name="Cheng C.Y."/>
            <person name="Krishnakumar V."/>
            <person name="Chan A.P."/>
            <person name="Thibaud-Nissen F."/>
            <person name="Schobel S."/>
            <person name="Town C.D."/>
        </authorList>
    </citation>
    <scope>GENOME REANNOTATION</scope>
    <source>
        <strain>cv. Columbia</strain>
    </source>
</reference>
<reference key="4">
    <citation type="journal article" date="2003" name="Science">
        <title>Empirical analysis of transcriptional activity in the Arabidopsis genome.</title>
        <authorList>
            <person name="Yamada K."/>
            <person name="Lim J."/>
            <person name="Dale J.M."/>
            <person name="Chen H."/>
            <person name="Shinn P."/>
            <person name="Palm C.J."/>
            <person name="Southwick A.M."/>
            <person name="Wu H.C."/>
            <person name="Kim C.J."/>
            <person name="Nguyen M."/>
            <person name="Pham P.K."/>
            <person name="Cheuk R.F."/>
            <person name="Karlin-Newmann G."/>
            <person name="Liu S.X."/>
            <person name="Lam B."/>
            <person name="Sakano H."/>
            <person name="Wu T."/>
            <person name="Yu G."/>
            <person name="Miranda M."/>
            <person name="Quach H.L."/>
            <person name="Tripp M."/>
            <person name="Chang C.H."/>
            <person name="Lee J.M."/>
            <person name="Toriumi M.J."/>
            <person name="Chan M.M."/>
            <person name="Tang C.C."/>
            <person name="Onodera C.S."/>
            <person name="Deng J.M."/>
            <person name="Akiyama K."/>
            <person name="Ansari Y."/>
            <person name="Arakawa T."/>
            <person name="Banh J."/>
            <person name="Banno F."/>
            <person name="Bowser L."/>
            <person name="Brooks S.Y."/>
            <person name="Carninci P."/>
            <person name="Chao Q."/>
            <person name="Choy N."/>
            <person name="Enju A."/>
            <person name="Goldsmith A.D."/>
            <person name="Gurjal M."/>
            <person name="Hansen N.F."/>
            <person name="Hayashizaki Y."/>
            <person name="Johnson-Hopson C."/>
            <person name="Hsuan V.W."/>
            <person name="Iida K."/>
            <person name="Karnes M."/>
            <person name="Khan S."/>
            <person name="Koesema E."/>
            <person name="Ishida J."/>
            <person name="Jiang P.X."/>
            <person name="Jones T."/>
            <person name="Kawai J."/>
            <person name="Kamiya A."/>
            <person name="Meyers C."/>
            <person name="Nakajima M."/>
            <person name="Narusaka M."/>
            <person name="Seki M."/>
            <person name="Sakurai T."/>
            <person name="Satou M."/>
            <person name="Tamse R."/>
            <person name="Vaysberg M."/>
            <person name="Wallender E.K."/>
            <person name="Wong C."/>
            <person name="Yamamura Y."/>
            <person name="Yuan S."/>
            <person name="Shinozaki K."/>
            <person name="Davis R.W."/>
            <person name="Theologis A."/>
            <person name="Ecker J.R."/>
        </authorList>
    </citation>
    <scope>NUCLEOTIDE SEQUENCE [LARGE SCALE MRNA]</scope>
    <source>
        <strain>cv. Columbia</strain>
    </source>
</reference>
<reference key="5">
    <citation type="journal article" date="1994" name="Plant Physiol.">
        <title>A Mutant of Arabidopsis Deficient in the Elongation of Palmitic Acid.</title>
        <authorList>
            <person name="Wu J."/>
            <person name="James D.W. Jr."/>
            <person name="Dooner H.K."/>
            <person name="Browse J."/>
        </authorList>
    </citation>
    <scope>FUNCTION</scope>
    <scope>CATALYTIC ACTIVITY</scope>
    <scope>MUTAGENESIS OF LEU-337</scope>
    <source>
        <strain>cv. Columbia</strain>
    </source>
</reference>
<reference key="6">
    <citation type="journal article" date="1995" name="Plant Cell">
        <title>Elevated levels of high-melting-point phosphatidylglycerols do not induce chilling sensitivity in an Arabidopsis mutant.</title>
        <authorList>
            <person name="Wu J."/>
            <person name="Browse J."/>
        </authorList>
    </citation>
    <scope>FUNCTION</scope>
    <scope>MUTAGENESIS OF LEU-337</scope>
    <source>
        <strain>cv. Columbia</strain>
    </source>
</reference>
<reference key="7">
    <citation type="journal article" date="1997" name="Plant Physiol.">
        <title>Low-temperature damage and subsequent recovery of fab1 mutant Arabidopsis exposed to 2 degrees C.</title>
        <authorList>
            <person name="Wu J."/>
            <person name="Lightner J."/>
            <person name="Warwick N."/>
            <person name="Browse J."/>
        </authorList>
    </citation>
    <scope>FUNCTION</scope>
    <scope>MUTAGENESIS OF LEU-337</scope>
    <source>
        <strain>cv. Columbia</strain>
    </source>
</reference>
<reference key="8">
    <citation type="journal article" date="2007" name="Proc. Natl. Acad. Sci. U.S.A.">
        <title>Modulating seed beta-ketoacyl-acyl carrier protein synthase II level converts the composition of a temperate seed oil to that of a palm-like tropical oil.</title>
        <authorList>
            <person name="Pidkowich M.S."/>
            <person name="Nguyen H.T."/>
            <person name="Heilmann I."/>
            <person name="Ischebeck T."/>
            <person name="Shanklin J."/>
        </authorList>
    </citation>
    <scope>FUNCTION</scope>
    <scope>DISRUPTION PHENOTYPE</scope>
    <scope>MUTAGENESIS OF LEU-337</scope>
</reference>
<reference key="9">
    <citation type="journal article" date="2008" name="Genes Genet. Syst.">
        <title>Expression and developmental function of the 3-ketoacyl-ACP synthase2 gene in Arabidopsis thaliana.</title>
        <authorList>
            <person name="Hakozaki H."/>
            <person name="Park J.-I."/>
            <person name="Endo M."/>
            <person name="Takada Y."/>
            <person name="Kazama T."/>
            <person name="Takeda Y."/>
            <person name="Suzuki G."/>
            <person name="Kawagishi-Kobayashi M."/>
            <person name="Watanabe M."/>
        </authorList>
    </citation>
    <scope>FUNCTION</scope>
    <scope>DISRUPTION PHENOTYPE</scope>
    <scope>TISSUE SPECIFICITY</scope>
    <scope>DEVELOPMENTAL STAGE</scope>
    <source>
        <strain>cv. Columbia</strain>
    </source>
</reference>
<reference key="10">
    <citation type="journal article" date="2008" name="PLoS ONE">
        <title>Sorting signals, N-terminal modifications and abundance of the chloroplast proteome.</title>
        <authorList>
            <person name="Zybailov B."/>
            <person name="Rutschow H."/>
            <person name="Friso G."/>
            <person name="Rudella A."/>
            <person name="Emanuelsson O."/>
            <person name="Sun Q."/>
            <person name="van Wijk K.J."/>
        </authorList>
    </citation>
    <scope>IDENTIFICATION BY MASS SPECTROMETRY</scope>
    <scope>SUBCELLULAR LOCATION [LARGE SCALE ANALYSIS]</scope>
</reference>
<feature type="transit peptide" description="Chloroplast" evidence="2">
    <location>
        <begin position="1"/>
        <end position="103"/>
    </location>
</feature>
<feature type="chain" id="PRO_0000406094" description="3-oxoacyl-[acyl-carrier-protein] synthase II, chloroplastic">
    <location>
        <begin position="104"/>
        <end position="541"/>
    </location>
</feature>
<feature type="domain" description="Ketosynthase family 3 (KS3)" evidence="3">
    <location>
        <begin position="129"/>
        <end position="539"/>
    </location>
</feature>
<feature type="active site" description="For beta-ketoacyl synthase activity" evidence="3">
    <location>
        <position position="292"/>
    </location>
</feature>
<feature type="active site" description="For beta-ketoacyl synthase activity" evidence="3">
    <location>
        <position position="432"/>
    </location>
</feature>
<feature type="active site" description="For beta-ketoacyl synthase activity" evidence="3">
    <location>
        <position position="468"/>
    </location>
</feature>
<feature type="mutagenesis site" description="In fab1; partial activity deficiency due to structural instability and reduced substrate binding affinity, resulting in increased levels of saturated 16:0 but reduced levels of 18:0 fatty acids, particularly in chloroplasts, and associated with damage and death at continuous low temperature (accompanied by chloroplast degenerescence), but not after transient chilling or freezing." evidence="4 5 6 7 10">
    <original>L</original>
    <variation>F</variation>
    <location>
        <position position="337"/>
    </location>
</feature>
<feature type="sequence conflict" description="In Ref. 4; AAL91174." evidence="11" ref="4">
    <original>A</original>
    <variation>V</variation>
    <location>
        <position position="472"/>
    </location>
</feature>
<name>KASC2_ARATH</name>
<proteinExistence type="evidence at protein level"/>
<keyword id="KW-0012">Acyltransferase</keyword>
<keyword id="KW-0150">Chloroplast</keyword>
<keyword id="KW-0217">Developmental protein</keyword>
<keyword id="KW-0275">Fatty acid biosynthesis</keyword>
<keyword id="KW-0276">Fatty acid metabolism</keyword>
<keyword id="KW-0444">Lipid biosynthesis</keyword>
<keyword id="KW-0443">Lipid metabolism</keyword>
<keyword id="KW-0934">Plastid</keyword>
<keyword id="KW-1185">Reference proteome</keyword>
<keyword id="KW-0808">Transferase</keyword>
<keyword id="KW-0809">Transit peptide</keyword>
<sequence>MVGASSSYASPLCTWFVAACMSVSHGGGDSRQAVALQSGGRSRRRRQLSKCSVASGSASIQALVTSCLDFGPCTHYNNNNALSSLFGSNSVSLNRNQRRLNRAASSGGAMAVMEMEKEAAVNKKPPTEQRRVVVTGMGVETSLGHDPHTFYENLLQGNSGISQIENFDCSEFPTRIAGEIKSFSTEGWVAPKLSKRMDKFMLYLLTAGKKALADGGVTDEVMAEFDKTKCGVLIGSAMGGMKVFYDAIEALRISYKKMNPFCVPFATTNMGSAMLAMDLGWMGPNYSISTACATSNFCILNSANHIIKGEADVMLCGGSDAVIIPIGLGGFVACRALSQRNNDPTKASRPWDTNRDGFVMGEGAGVLLLEELEHAKKRGATIYAEFLGGSFTCDAYHMTEPHPDGAGVILCIERALASAGISKEQINYINAHATSTHAGDIKEYQALAHCFGQNPELKVNSTKSMIGHLLGAAGAVEAVATVQAIRTGWVHPNINLENPDSGVDTKLLVGPKKERLDIKAALSNSFGFGGHNSSIIFAPYK</sequence>
<gene>
    <name type="primary">KAS2</name>
    <name type="synonym">FAB1</name>
    <name type="ordered locus">At1g74960</name>
    <name type="ORF">F25A4.7</name>
    <name type="ORF">F9E10.19</name>
</gene>
<comment type="function">
    <text evidence="4 5 6 7 9 10">Essential protein that catalyzes the condensation reaction of fatty acid synthesis by the addition to an acyl acceptor of two carbons from malonyl-ACP. Specific for elongation from C-16 and C-16 to unsaturated C-18 fatty acids. Confers resistance to low temperatures by maintaining chloroplast membranes integrity. Involved in the regulation of fatty acids ratios during seed metabolism. Required for embryo development, especially at the transition from the globular to the heart stage.</text>
</comment>
<comment type="catalytic activity">
    <reaction evidence="5">
        <text>a fatty acyl-[ACP] + malonyl-[ACP] + H(+) = a 3-oxoacyl-[ACP] + holo-[ACP] + CO2</text>
        <dbReference type="Rhea" id="RHEA:22836"/>
        <dbReference type="Rhea" id="RHEA-COMP:9623"/>
        <dbReference type="Rhea" id="RHEA-COMP:9685"/>
        <dbReference type="Rhea" id="RHEA-COMP:9916"/>
        <dbReference type="Rhea" id="RHEA-COMP:14125"/>
        <dbReference type="ChEBI" id="CHEBI:15378"/>
        <dbReference type="ChEBI" id="CHEBI:16526"/>
        <dbReference type="ChEBI" id="CHEBI:64479"/>
        <dbReference type="ChEBI" id="CHEBI:78449"/>
        <dbReference type="ChEBI" id="CHEBI:78776"/>
        <dbReference type="ChEBI" id="CHEBI:138651"/>
        <dbReference type="EC" id="2.3.1.41"/>
    </reaction>
</comment>
<comment type="subunit">
    <text evidence="1">Homodimer.</text>
</comment>
<comment type="subcellular location">
    <subcellularLocation>
        <location evidence="8">Plastid</location>
        <location evidence="8">Chloroplast stroma</location>
    </subcellularLocation>
</comment>
<comment type="tissue specificity">
    <text evidence="9">Mostly expressed in siliques, and, to a lower extent, in leaves, stems, flower buds, and flowers.</text>
</comment>
<comment type="developmental stage">
    <text evidence="9">First observed during the transition from the late globular to the early heart embryo stages. Later observed during heart, tropedo, and cotyledonary embryo stages. In seedlings, observed in the shoot apex and stomatal guard cells. In adult plants, expressed in inflorescences. In flowers, strongly present in styles and pollen grains.</text>
</comment>
<comment type="disruption phenotype">
    <text evidence="7 9">Lethal when homozygous due to embryo abortion before the torpedo stage. Converts temperate oilseed composition (rich in unsaturated 18-carbon fatty acids) to that of a palm-like tropical oil (enriched in saturated 16-carbon fatty acids).</text>
</comment>
<comment type="similarity">
    <text evidence="11">Belongs to the thiolase-like superfamily. Beta-ketoacyl-ACP synthases family.</text>
</comment>
<comment type="sequence caution" evidence="11">
    <conflict type="erroneous gene model prediction">
        <sequence resource="EMBL-CDS" id="AAD55280"/>
    </conflict>
</comment>
<comment type="sequence caution" evidence="11">
    <conflict type="erroneous initiation">
        <sequence resource="EMBL-CDS" id="AAL06498"/>
    </conflict>
    <text>Truncated N-terminus.</text>
</comment>
<comment type="sequence caution" evidence="11">
    <conflict type="frameshift">
        <sequence resource="EMBL-CDS" id="AAL06498"/>
    </conflict>
</comment>
<organism>
    <name type="scientific">Arabidopsis thaliana</name>
    <name type="common">Mouse-ear cress</name>
    <dbReference type="NCBI Taxonomy" id="3702"/>
    <lineage>
        <taxon>Eukaryota</taxon>
        <taxon>Viridiplantae</taxon>
        <taxon>Streptophyta</taxon>
        <taxon>Embryophyta</taxon>
        <taxon>Tracheophyta</taxon>
        <taxon>Spermatophyta</taxon>
        <taxon>Magnoliopsida</taxon>
        <taxon>eudicotyledons</taxon>
        <taxon>Gunneridae</taxon>
        <taxon>Pentapetalae</taxon>
        <taxon>rosids</taxon>
        <taxon>malvids</taxon>
        <taxon>Brassicales</taxon>
        <taxon>Brassicaceae</taxon>
        <taxon>Camelineae</taxon>
        <taxon>Arabidopsis</taxon>
    </lineage>
</organism>
<accession>Q9C9P4</accession>
<accession>Q8RXF5</accession>
<accession>Q945N5</accession>
<accession>Q9SSG8</accession>
<evidence type="ECO:0000250" key="1"/>
<evidence type="ECO:0000255" key="2"/>
<evidence type="ECO:0000255" key="3">
    <source>
        <dbReference type="PROSITE-ProRule" id="PRU01348"/>
    </source>
</evidence>
<evidence type="ECO:0000269" key="4">
    <source>
    </source>
</evidence>
<evidence type="ECO:0000269" key="5">
    <source>
    </source>
</evidence>
<evidence type="ECO:0000269" key="6">
    <source>
    </source>
</evidence>
<evidence type="ECO:0000269" key="7">
    <source>
    </source>
</evidence>
<evidence type="ECO:0000269" key="8">
    <source>
    </source>
</evidence>
<evidence type="ECO:0000269" key="9">
    <source>
    </source>
</evidence>
<evidence type="ECO:0000269" key="10">
    <source>
    </source>
</evidence>
<evidence type="ECO:0000305" key="11"/>
<protein>
    <recommendedName>
        <fullName>3-oxoacyl-[acyl-carrier-protein] synthase II, chloroplastic</fullName>
        <ecNumber>2.3.1.41</ecNumber>
    </recommendedName>
    <alternativeName>
        <fullName>Beta-ketoacyl-acyl-carrier-protein synthase II</fullName>
        <shortName>AtKAS2</shortName>
        <shortName>Beta-ketoacyl-ACP synthetase 2</shortName>
    </alternativeName>
    <alternativeName>
        <fullName>Protein FATTY ACID BIOSYNTHESIS 1</fullName>
    </alternativeName>
</protein>
<dbReference type="EC" id="2.3.1.41"/>
<dbReference type="EMBL" id="AF318307">
    <property type="protein sequence ID" value="AAK69603.1"/>
    <property type="molecule type" value="mRNA"/>
</dbReference>
<dbReference type="EMBL" id="AC008263">
    <property type="protein sequence ID" value="AAD55280.1"/>
    <property type="status" value="ALT_SEQ"/>
    <property type="molecule type" value="Genomic_DNA"/>
</dbReference>
<dbReference type="EMBL" id="AC013258">
    <property type="protein sequence ID" value="AAG51920.1"/>
    <property type="molecule type" value="Genomic_DNA"/>
</dbReference>
<dbReference type="EMBL" id="CP002684">
    <property type="protein sequence ID" value="AEE35655.1"/>
    <property type="molecule type" value="Genomic_DNA"/>
</dbReference>
<dbReference type="EMBL" id="CP002684">
    <property type="protein sequence ID" value="AEE35656.1"/>
    <property type="molecule type" value="Genomic_DNA"/>
</dbReference>
<dbReference type="EMBL" id="CP002684">
    <property type="protein sequence ID" value="AEE35657.1"/>
    <property type="molecule type" value="Genomic_DNA"/>
</dbReference>
<dbReference type="EMBL" id="AF412045">
    <property type="protein sequence ID" value="AAL06498.1"/>
    <property type="status" value="ALT_FRAME"/>
    <property type="molecule type" value="mRNA"/>
</dbReference>
<dbReference type="EMBL" id="AF419598">
    <property type="protein sequence ID" value="AAL31930.1"/>
    <property type="molecule type" value="mRNA"/>
</dbReference>
<dbReference type="EMBL" id="AY054196">
    <property type="protein sequence ID" value="AAL06857.1"/>
    <property type="molecule type" value="mRNA"/>
</dbReference>
<dbReference type="EMBL" id="AY081285">
    <property type="protein sequence ID" value="AAL91174.1"/>
    <property type="molecule type" value="mRNA"/>
</dbReference>
<dbReference type="EMBL" id="AY097344">
    <property type="protein sequence ID" value="AAM19860.1"/>
    <property type="molecule type" value="mRNA"/>
</dbReference>
<dbReference type="PIR" id="D96779">
    <property type="entry name" value="D96779"/>
</dbReference>
<dbReference type="RefSeq" id="NP_001185400.1">
    <property type="nucleotide sequence ID" value="NM_001198471.1"/>
</dbReference>
<dbReference type="RefSeq" id="NP_565097.1">
    <property type="nucleotide sequence ID" value="NM_106154.4"/>
</dbReference>
<dbReference type="RefSeq" id="NP_849888.1">
    <property type="nucleotide sequence ID" value="NM_179557.4"/>
</dbReference>
<dbReference type="SMR" id="Q9C9P4"/>
<dbReference type="BioGRID" id="29054">
    <property type="interactions" value="1"/>
</dbReference>
<dbReference type="FunCoup" id="Q9C9P4">
    <property type="interactions" value="1237"/>
</dbReference>
<dbReference type="STRING" id="3702.Q9C9P4"/>
<dbReference type="PaxDb" id="3702-AT1G74960.2"/>
<dbReference type="ProteomicsDB" id="250617"/>
<dbReference type="EnsemblPlants" id="AT1G74960.1">
    <property type="protein sequence ID" value="AT1G74960.1"/>
    <property type="gene ID" value="AT1G74960"/>
</dbReference>
<dbReference type="EnsemblPlants" id="AT1G74960.2">
    <property type="protein sequence ID" value="AT1G74960.2"/>
    <property type="gene ID" value="AT1G74960"/>
</dbReference>
<dbReference type="EnsemblPlants" id="AT1G74960.3">
    <property type="protein sequence ID" value="AT1G74960.3"/>
    <property type="gene ID" value="AT1G74960"/>
</dbReference>
<dbReference type="GeneID" id="843835"/>
<dbReference type="Gramene" id="AT1G74960.1">
    <property type="protein sequence ID" value="AT1G74960.1"/>
    <property type="gene ID" value="AT1G74960"/>
</dbReference>
<dbReference type="Gramene" id="AT1G74960.2">
    <property type="protein sequence ID" value="AT1G74960.2"/>
    <property type="gene ID" value="AT1G74960"/>
</dbReference>
<dbReference type="Gramene" id="AT1G74960.3">
    <property type="protein sequence ID" value="AT1G74960.3"/>
    <property type="gene ID" value="AT1G74960"/>
</dbReference>
<dbReference type="KEGG" id="ath:AT1G74960"/>
<dbReference type="Araport" id="AT1G74960"/>
<dbReference type="TAIR" id="AT1G74960">
    <property type="gene designation" value="FAB1"/>
</dbReference>
<dbReference type="eggNOG" id="KOG1394">
    <property type="taxonomic scope" value="Eukaryota"/>
</dbReference>
<dbReference type="HOGENOM" id="CLU_000022_69_1_1"/>
<dbReference type="InParanoid" id="Q9C9P4"/>
<dbReference type="OMA" id="YAMSHAV"/>
<dbReference type="OrthoDB" id="5334845at2759"/>
<dbReference type="PhylomeDB" id="Q9C9P4"/>
<dbReference type="BioCyc" id="ARA:MONOMER-14118"/>
<dbReference type="BioCyc" id="MetaCyc:MONOMER-14118"/>
<dbReference type="BRENDA" id="2.3.1.179">
    <property type="organism ID" value="399"/>
</dbReference>
<dbReference type="PRO" id="PR:Q9C9P4"/>
<dbReference type="Proteomes" id="UP000006548">
    <property type="component" value="Chromosome 1"/>
</dbReference>
<dbReference type="ExpressionAtlas" id="Q9C9P4">
    <property type="expression patterns" value="baseline and differential"/>
</dbReference>
<dbReference type="GO" id="GO:0009507">
    <property type="term" value="C:chloroplast"/>
    <property type="evidence" value="ECO:0007005"/>
    <property type="project" value="TAIR"/>
</dbReference>
<dbReference type="GO" id="GO:0009570">
    <property type="term" value="C:chloroplast stroma"/>
    <property type="evidence" value="ECO:0007005"/>
    <property type="project" value="TAIR"/>
</dbReference>
<dbReference type="GO" id="GO:0005829">
    <property type="term" value="C:cytosol"/>
    <property type="evidence" value="ECO:0007005"/>
    <property type="project" value="TAIR"/>
</dbReference>
<dbReference type="GO" id="GO:0009536">
    <property type="term" value="C:plastid"/>
    <property type="evidence" value="ECO:0000250"/>
    <property type="project" value="TAIR"/>
</dbReference>
<dbReference type="GO" id="GO:0004315">
    <property type="term" value="F:3-oxoacyl-[acyl-carrier-protein] synthase activity"/>
    <property type="evidence" value="ECO:0000314"/>
    <property type="project" value="TAIR"/>
</dbReference>
<dbReference type="GO" id="GO:0009631">
    <property type="term" value="P:cold acclimation"/>
    <property type="evidence" value="ECO:0000315"/>
    <property type="project" value="UniProtKB"/>
</dbReference>
<dbReference type="GO" id="GO:0009793">
    <property type="term" value="P:embryo development ending in seed dormancy"/>
    <property type="evidence" value="ECO:0000315"/>
    <property type="project" value="UniProtKB"/>
</dbReference>
<dbReference type="GO" id="GO:0006633">
    <property type="term" value="P:fatty acid biosynthetic process"/>
    <property type="evidence" value="ECO:0000314"/>
    <property type="project" value="TAIR"/>
</dbReference>
<dbReference type="GO" id="GO:0006636">
    <property type="term" value="P:unsaturated fatty acid biosynthetic process"/>
    <property type="evidence" value="ECO:0000304"/>
    <property type="project" value="TAIR"/>
</dbReference>
<dbReference type="CDD" id="cd00834">
    <property type="entry name" value="KAS_I_II"/>
    <property type="match status" value="1"/>
</dbReference>
<dbReference type="FunFam" id="3.40.47.10:FF:000036">
    <property type="entry name" value="3-oxoacyl-[acyl-carrier-protein] synthase II chloroplastic"/>
    <property type="match status" value="1"/>
</dbReference>
<dbReference type="Gene3D" id="3.40.47.10">
    <property type="match status" value="1"/>
</dbReference>
<dbReference type="InterPro" id="IPR017568">
    <property type="entry name" value="3-oxoacyl-ACP_synth-2"/>
</dbReference>
<dbReference type="InterPro" id="IPR000794">
    <property type="entry name" value="Beta-ketoacyl_synthase"/>
</dbReference>
<dbReference type="InterPro" id="IPR018201">
    <property type="entry name" value="Ketoacyl_synth_AS"/>
</dbReference>
<dbReference type="InterPro" id="IPR014031">
    <property type="entry name" value="Ketoacyl_synth_C"/>
</dbReference>
<dbReference type="InterPro" id="IPR014030">
    <property type="entry name" value="Ketoacyl_synth_N"/>
</dbReference>
<dbReference type="InterPro" id="IPR020841">
    <property type="entry name" value="PKS_Beta-ketoAc_synthase_dom"/>
</dbReference>
<dbReference type="InterPro" id="IPR016039">
    <property type="entry name" value="Thiolase-like"/>
</dbReference>
<dbReference type="NCBIfam" id="TIGR03150">
    <property type="entry name" value="fabF"/>
    <property type="match status" value="1"/>
</dbReference>
<dbReference type="NCBIfam" id="NF004970">
    <property type="entry name" value="PRK06333.1"/>
    <property type="match status" value="1"/>
</dbReference>
<dbReference type="NCBIfam" id="NF005589">
    <property type="entry name" value="PRK07314.1"/>
    <property type="match status" value="1"/>
</dbReference>
<dbReference type="PANTHER" id="PTHR11712:SF332">
    <property type="entry name" value="3-OXOACYL-[ACYL-CARRIER-PROTEIN] SYNTHASE II, CHLOROPLASTIC"/>
    <property type="match status" value="1"/>
</dbReference>
<dbReference type="PANTHER" id="PTHR11712">
    <property type="entry name" value="POLYKETIDE SYNTHASE-RELATED"/>
    <property type="match status" value="1"/>
</dbReference>
<dbReference type="Pfam" id="PF00109">
    <property type="entry name" value="ketoacyl-synt"/>
    <property type="match status" value="1"/>
</dbReference>
<dbReference type="Pfam" id="PF02801">
    <property type="entry name" value="Ketoacyl-synt_C"/>
    <property type="match status" value="1"/>
</dbReference>
<dbReference type="SMART" id="SM00825">
    <property type="entry name" value="PKS_KS"/>
    <property type="match status" value="1"/>
</dbReference>
<dbReference type="SUPFAM" id="SSF53901">
    <property type="entry name" value="Thiolase-like"/>
    <property type="match status" value="2"/>
</dbReference>
<dbReference type="PROSITE" id="PS00606">
    <property type="entry name" value="KS3_1"/>
    <property type="match status" value="1"/>
</dbReference>
<dbReference type="PROSITE" id="PS52004">
    <property type="entry name" value="KS3_2"/>
    <property type="match status" value="1"/>
</dbReference>